<gene>
    <name type="primary">Crhr2</name>
    <name type="synonym">Crf2r</name>
</gene>
<name>CRFR2_RAT</name>
<reference key="1">
    <citation type="journal article" date="1995" name="Proc. Natl. Acad. Sci. U.S.A.">
        <title>Cloning and characterization of a functionally distinct corticotropin-releasing factor receptor subtype from rat brain.</title>
        <authorList>
            <person name="Lovenberg T.W."/>
            <person name="Liaw C.W."/>
            <person name="Grigoriadis D.E."/>
            <person name="Clevenger W."/>
            <person name="Chalmers D.T."/>
            <person name="de Souza E.B."/>
            <person name="Oltersdorf T."/>
        </authorList>
    </citation>
    <scope>NUCLEOTIDE SEQUENCE [MRNA]</scope>
    <scope>FUNCTION</scope>
    <scope>SUBCELLULAR LOCATION</scope>
    <scope>TISSUE SPECIFICITY</scope>
    <source>
        <strain>Sprague-Dawley</strain>
        <tissue>Hypothalamus</tissue>
        <tissue>Lung</tissue>
    </source>
</reference>
<reference key="2">
    <citation type="journal article" date="1995" name="Proc. Natl. Acad. Sci. U.S.A.">
        <authorList>
            <person name="Lovenberg T.W."/>
            <person name="Liaw C.W."/>
            <person name="Grigoriadis D.E."/>
            <person name="Clevenger W."/>
            <person name="Chalmers D.T."/>
            <person name="de Souza E.B."/>
            <person name="Oltersdorf T."/>
        </authorList>
    </citation>
    <scope>ERRATUM OF PUBMED:7846062</scope>
</reference>
<reference key="3">
    <citation type="journal article" date="2004" name="Nature">
        <title>Genome sequence of the Brown Norway rat yields insights into mammalian evolution.</title>
        <authorList>
            <person name="Gibbs R.A."/>
            <person name="Weinstock G.M."/>
            <person name="Metzker M.L."/>
            <person name="Muzny D.M."/>
            <person name="Sodergren E.J."/>
            <person name="Scherer S."/>
            <person name="Scott G."/>
            <person name="Steffen D."/>
            <person name="Worley K.C."/>
            <person name="Burch P.E."/>
            <person name="Okwuonu G."/>
            <person name="Hines S."/>
            <person name="Lewis L."/>
            <person name="Deramo C."/>
            <person name="Delgado O."/>
            <person name="Dugan-Rocha S."/>
            <person name="Miner G."/>
            <person name="Morgan M."/>
            <person name="Hawes A."/>
            <person name="Gill R."/>
            <person name="Holt R.A."/>
            <person name="Adams M.D."/>
            <person name="Amanatides P.G."/>
            <person name="Baden-Tillson H."/>
            <person name="Barnstead M."/>
            <person name="Chin S."/>
            <person name="Evans C.A."/>
            <person name="Ferriera S."/>
            <person name="Fosler C."/>
            <person name="Glodek A."/>
            <person name="Gu Z."/>
            <person name="Jennings D."/>
            <person name="Kraft C.L."/>
            <person name="Nguyen T."/>
            <person name="Pfannkoch C.M."/>
            <person name="Sitter C."/>
            <person name="Sutton G.G."/>
            <person name="Venter J.C."/>
            <person name="Woodage T."/>
            <person name="Smith D."/>
            <person name="Lee H.-M."/>
            <person name="Gustafson E."/>
            <person name="Cahill P."/>
            <person name="Kana A."/>
            <person name="Doucette-Stamm L."/>
            <person name="Weinstock K."/>
            <person name="Fechtel K."/>
            <person name="Weiss R.B."/>
            <person name="Dunn D.M."/>
            <person name="Green E.D."/>
            <person name="Blakesley R.W."/>
            <person name="Bouffard G.G."/>
            <person name="De Jong P.J."/>
            <person name="Osoegawa K."/>
            <person name="Zhu B."/>
            <person name="Marra M."/>
            <person name="Schein J."/>
            <person name="Bosdet I."/>
            <person name="Fjell C."/>
            <person name="Jones S."/>
            <person name="Krzywinski M."/>
            <person name="Mathewson C."/>
            <person name="Siddiqui A."/>
            <person name="Wye N."/>
            <person name="McPherson J."/>
            <person name="Zhao S."/>
            <person name="Fraser C.M."/>
            <person name="Shetty J."/>
            <person name="Shatsman S."/>
            <person name="Geer K."/>
            <person name="Chen Y."/>
            <person name="Abramzon S."/>
            <person name="Nierman W.C."/>
            <person name="Havlak P.H."/>
            <person name="Chen R."/>
            <person name="Durbin K.J."/>
            <person name="Egan A."/>
            <person name="Ren Y."/>
            <person name="Song X.-Z."/>
            <person name="Li B."/>
            <person name="Liu Y."/>
            <person name="Qin X."/>
            <person name="Cawley S."/>
            <person name="Cooney A.J."/>
            <person name="D'Souza L.M."/>
            <person name="Martin K."/>
            <person name="Wu J.Q."/>
            <person name="Gonzalez-Garay M.L."/>
            <person name="Jackson A.R."/>
            <person name="Kalafus K.J."/>
            <person name="McLeod M.P."/>
            <person name="Milosavljevic A."/>
            <person name="Virk D."/>
            <person name="Volkov A."/>
            <person name="Wheeler D.A."/>
            <person name="Zhang Z."/>
            <person name="Bailey J.A."/>
            <person name="Eichler E.E."/>
            <person name="Tuzun E."/>
            <person name="Birney E."/>
            <person name="Mongin E."/>
            <person name="Ureta-Vidal A."/>
            <person name="Woodwark C."/>
            <person name="Zdobnov E."/>
            <person name="Bork P."/>
            <person name="Suyama M."/>
            <person name="Torrents D."/>
            <person name="Alexandersson M."/>
            <person name="Trask B.J."/>
            <person name="Young J.M."/>
            <person name="Huang H."/>
            <person name="Wang H."/>
            <person name="Xing H."/>
            <person name="Daniels S."/>
            <person name="Gietzen D."/>
            <person name="Schmidt J."/>
            <person name="Stevens K."/>
            <person name="Vitt U."/>
            <person name="Wingrove J."/>
            <person name="Camara F."/>
            <person name="Mar Alba M."/>
            <person name="Abril J.F."/>
            <person name="Guigo R."/>
            <person name="Smit A."/>
            <person name="Dubchak I."/>
            <person name="Rubin E.M."/>
            <person name="Couronne O."/>
            <person name="Poliakov A."/>
            <person name="Huebner N."/>
            <person name="Ganten D."/>
            <person name="Goesele C."/>
            <person name="Hummel O."/>
            <person name="Kreitler T."/>
            <person name="Lee Y.-A."/>
            <person name="Monti J."/>
            <person name="Schulz H."/>
            <person name="Zimdahl H."/>
            <person name="Himmelbauer H."/>
            <person name="Lehrach H."/>
            <person name="Jacob H.J."/>
            <person name="Bromberg S."/>
            <person name="Gullings-Handley J."/>
            <person name="Jensen-Seaman M.I."/>
            <person name="Kwitek A.E."/>
            <person name="Lazar J."/>
            <person name="Pasko D."/>
            <person name="Tonellato P.J."/>
            <person name="Twigger S."/>
            <person name="Ponting C.P."/>
            <person name="Duarte J.M."/>
            <person name="Rice S."/>
            <person name="Goodstadt L."/>
            <person name="Beatson S.A."/>
            <person name="Emes R.D."/>
            <person name="Winter E.E."/>
            <person name="Webber C."/>
            <person name="Brandt P."/>
            <person name="Nyakatura G."/>
            <person name="Adetobi M."/>
            <person name="Chiaromonte F."/>
            <person name="Elnitski L."/>
            <person name="Eswara P."/>
            <person name="Hardison R.C."/>
            <person name="Hou M."/>
            <person name="Kolbe D."/>
            <person name="Makova K."/>
            <person name="Miller W."/>
            <person name="Nekrutenko A."/>
            <person name="Riemer C."/>
            <person name="Schwartz S."/>
            <person name="Taylor J."/>
            <person name="Yang S."/>
            <person name="Zhang Y."/>
            <person name="Lindpaintner K."/>
            <person name="Andrews T.D."/>
            <person name="Caccamo M."/>
            <person name="Clamp M."/>
            <person name="Clarke L."/>
            <person name="Curwen V."/>
            <person name="Durbin R.M."/>
            <person name="Eyras E."/>
            <person name="Searle S.M."/>
            <person name="Cooper G.M."/>
            <person name="Batzoglou S."/>
            <person name="Brudno M."/>
            <person name="Sidow A."/>
            <person name="Stone E.A."/>
            <person name="Payseur B.A."/>
            <person name="Bourque G."/>
            <person name="Lopez-Otin C."/>
            <person name="Puente X.S."/>
            <person name="Chakrabarti K."/>
            <person name="Chatterji S."/>
            <person name="Dewey C."/>
            <person name="Pachter L."/>
            <person name="Bray N."/>
            <person name="Yap V.B."/>
            <person name="Caspi A."/>
            <person name="Tesler G."/>
            <person name="Pevzner P.A."/>
            <person name="Haussler D."/>
            <person name="Roskin K.M."/>
            <person name="Baertsch R."/>
            <person name="Clawson H."/>
            <person name="Furey T.S."/>
            <person name="Hinrichs A.S."/>
            <person name="Karolchik D."/>
            <person name="Kent W.J."/>
            <person name="Rosenbloom K.R."/>
            <person name="Trumbower H."/>
            <person name="Weirauch M."/>
            <person name="Cooper D.N."/>
            <person name="Stenson P.D."/>
            <person name="Ma B."/>
            <person name="Brent M."/>
            <person name="Arumugam M."/>
            <person name="Shteynberg D."/>
            <person name="Copley R.R."/>
            <person name="Taylor M.S."/>
            <person name="Riethman H."/>
            <person name="Mudunuri U."/>
            <person name="Peterson J."/>
            <person name="Guyer M."/>
            <person name="Felsenfeld A."/>
            <person name="Old S."/>
            <person name="Mockrin S."/>
            <person name="Collins F.S."/>
        </authorList>
    </citation>
    <scope>NUCLEOTIDE SEQUENCE [LARGE SCALE GENOMIC DNA]</scope>
    <source>
        <strain>Brown Norway</strain>
    </source>
</reference>
<reference key="4">
    <citation type="submission" date="2005-09" db="EMBL/GenBank/DDBJ databases">
        <authorList>
            <person name="Mural R.J."/>
            <person name="Li P.W."/>
            <person name="Adams M.D."/>
            <person name="Amanatides P.G."/>
            <person name="Baden-Tillson H."/>
            <person name="Barnstead M."/>
            <person name="Chin S.H."/>
            <person name="Dew I."/>
            <person name="Evans C.A."/>
            <person name="Ferriera S."/>
            <person name="Flanigan M."/>
            <person name="Fosler C."/>
            <person name="Glodek A."/>
            <person name="Gu Z."/>
            <person name="Holt R.A."/>
            <person name="Jennings D."/>
            <person name="Kraft C.L."/>
            <person name="Lu F."/>
            <person name="Nguyen T."/>
            <person name="Nusskern D.R."/>
            <person name="Pfannkoch C.M."/>
            <person name="Sitter C."/>
            <person name="Sutton G.G."/>
            <person name="Venter J.C."/>
            <person name="Wang Z."/>
            <person name="Woodage T."/>
            <person name="Zheng X.H."/>
            <person name="Zhong F."/>
        </authorList>
    </citation>
    <scope>NUCLEOTIDE SEQUENCE [LARGE SCALE GENOMIC DNA]</scope>
    <source>
        <strain>Brown Norway</strain>
    </source>
</reference>
<reference key="5">
    <citation type="journal article" date="2006" name="J. Biol. Chem.">
        <title>The corticotropin-releasing factor receptor type 2a contains an N-terminal pseudo signal peptide.</title>
        <authorList>
            <person name="Rutz C."/>
            <person name="Renner A."/>
            <person name="Alken M."/>
            <person name="Schulz K."/>
            <person name="Beyermann M."/>
            <person name="Wiesner B."/>
            <person name="Rosenthal W."/>
            <person name="Schulein R."/>
        </authorList>
    </citation>
    <scope>GLYCOSYLATION AT ASN-13</scope>
    <scope>MUTAGENESIS OF ASN-13</scope>
    <scope>NON-CLEAVABLE SIGNAL SEQUENCE</scope>
    <scope>SUBCELLULAR LOCATION</scope>
</reference>
<proteinExistence type="evidence at protein level"/>
<sequence>MDAALLLSLLEANCSLALAEELLLDGWGEPPDPEGPYSYCNTTLDQIGTCWPQSAPGALVERPCPEYFNGIKYNTTRNAYRECLENGTWASRVNYSHCEPILDDKQRKYDLHYRIALIINYLGHCVSVVALVAAFLLFLVLRSIRCLRNVIHWNLITTFILRNITWFLLQLIDHEVHEGNEVWCRCVTTIFNYFVVTNFFWMFVEGCYLHTAIVMTYSTEHLRKWLFLFIGWCIPCPIIVAWAVGKLYYENEQCWFGKEPGDLVDYIYQGPIILVLLINFVFLFNIVRILMTKLRASTTSETIQYRKAVKATLVLLPLLGITYMLFFVNPGEDDLSQIVFIYFNSFLQSFQGFFVSVFYCFFNGEVRSALRKRWHRWQDHHALRVPVARAMSIPTSPTRISFHSIKQTAAV</sequence>
<keyword id="KW-0025">Alternative splicing</keyword>
<keyword id="KW-1003">Cell membrane</keyword>
<keyword id="KW-1015">Disulfide bond</keyword>
<keyword id="KW-0297">G-protein coupled receptor</keyword>
<keyword id="KW-0325">Glycoprotein</keyword>
<keyword id="KW-0472">Membrane</keyword>
<keyword id="KW-0675">Receptor</keyword>
<keyword id="KW-1185">Reference proteome</keyword>
<keyword id="KW-0732">Signal</keyword>
<keyword id="KW-0807">Transducer</keyword>
<keyword id="KW-0812">Transmembrane</keyword>
<keyword id="KW-1133">Transmembrane helix</keyword>
<comment type="function">
    <text evidence="4">G-protein coupled receptor for CRH (corticotropin-releasing factor), UCN (urocortin), UCN2 and UCN3. Has high affinity for UCN. Ligand binding causes a conformation change that triggers signaling via guanine nucleotide-binding proteins (G proteins) and down-stream effectors, such as adenylate cyclase. Promotes the activation of adenylate cyclase, leading to increased intracellular cAMP levels.</text>
</comment>
<comment type="subunit">
    <text evidence="1">Monomer. Interacts (via N-terminal extracellular domain) with CRF, UCN, UCN2 and UCN3 (By similarity).</text>
</comment>
<comment type="subcellular location">
    <subcellularLocation>
        <location evidence="3 4">Cell membrane</location>
        <topology evidence="3 4">Multi-pass membrane protein</topology>
    </subcellularLocation>
</comment>
<comment type="alternative products">
    <event type="alternative splicing"/>
    <isoform>
        <id>P47866-1</id>
        <name>CRF2-alpha</name>
        <sequence type="displayed"/>
    </isoform>
    <isoform>
        <id>P47866-2</id>
        <name>CRF2-beta</name>
        <sequence type="described" ref="VSP_002001"/>
    </isoform>
</comment>
<comment type="tissue specificity">
    <text evidence="4">Predominantly expressed in limbic regions of the brain such as the lateral septum, the entorhinal cortex, the hypothalamic ventromedial nucleus and several amygdaloid nuclei. Also detectable in lung, kidney and heart.</text>
</comment>
<comment type="domain">
    <text evidence="1">The transmembrane domain is composed of seven transmembrane helices that are arranged in V-shape. Transmembrane helix 7 assumes a sharply kinked structure (By similarity).</text>
</comment>
<comment type="domain">
    <text evidence="1">The uncleaved pseudo signal peptide prevents receptor's oligomerization and coupling to G(i) subunits. It is also responsible for the rather low receptor localization at the plasma membrane (By similarity).</text>
</comment>
<comment type="PTM">
    <text evidence="3">A N-glycosylation site within the signal peptide impedes its proper cleavage and function.</text>
</comment>
<comment type="miscellaneous">
    <molecule>Isoform CRF2-alpha</molecule>
    <text>Major isoform.</text>
</comment>
<comment type="similarity">
    <text evidence="5">Belongs to the G-protein coupled receptor 2 family.</text>
</comment>
<dbReference type="EMBL" id="U16253">
    <property type="protein sequence ID" value="AAC52159.1"/>
    <property type="molecule type" value="mRNA"/>
</dbReference>
<dbReference type="EMBL" id="AABR06031050">
    <property type="status" value="NOT_ANNOTATED_CDS"/>
    <property type="molecule type" value="Genomic_DNA"/>
</dbReference>
<dbReference type="EMBL" id="CH474011">
    <property type="protein sequence ID" value="EDL88099.1"/>
    <property type="molecule type" value="Genomic_DNA"/>
</dbReference>
<dbReference type="PIR" id="A55610">
    <property type="entry name" value="A55610"/>
</dbReference>
<dbReference type="RefSeq" id="NP_073205.2">
    <molecule id="P47866-1"/>
    <property type="nucleotide sequence ID" value="NM_022714.2"/>
</dbReference>
<dbReference type="SMR" id="P47866"/>
<dbReference type="BioGRID" id="249194">
    <property type="interactions" value="7"/>
</dbReference>
<dbReference type="FunCoup" id="P47866">
    <property type="interactions" value="21"/>
</dbReference>
<dbReference type="IntAct" id="P47866">
    <property type="interactions" value="1"/>
</dbReference>
<dbReference type="MINT" id="P47866"/>
<dbReference type="STRING" id="10116.ENSRNOP00000014925"/>
<dbReference type="BindingDB" id="P47866"/>
<dbReference type="ChEMBL" id="CHEMBL3581"/>
<dbReference type="DrugCentral" id="P47866"/>
<dbReference type="GuidetoPHARMACOLOGY" id="213"/>
<dbReference type="GlyCosmos" id="P47866">
    <property type="glycosylation" value="5 sites, No reported glycans"/>
</dbReference>
<dbReference type="GlyGen" id="P47866">
    <property type="glycosylation" value="5 sites"/>
</dbReference>
<dbReference type="iPTMnet" id="P47866"/>
<dbReference type="PhosphoSitePlus" id="P47866"/>
<dbReference type="PaxDb" id="10116-ENSRNOP00000014925"/>
<dbReference type="Ensembl" id="ENSRNOT00000033672.4">
    <molecule id="P47866-1"/>
    <property type="protein sequence ID" value="ENSRNOP00000035712.2"/>
    <property type="gene ID" value="ENSRNOG00000011145.9"/>
</dbReference>
<dbReference type="GeneID" id="64680"/>
<dbReference type="KEGG" id="rno:64680"/>
<dbReference type="UCSC" id="RGD:70547">
    <molecule id="P47866-1"/>
    <property type="organism name" value="rat"/>
</dbReference>
<dbReference type="AGR" id="RGD:70547"/>
<dbReference type="CTD" id="1395"/>
<dbReference type="RGD" id="70547">
    <property type="gene designation" value="Crhr2"/>
</dbReference>
<dbReference type="eggNOG" id="KOG4564">
    <property type="taxonomic scope" value="Eukaryota"/>
</dbReference>
<dbReference type="GeneTree" id="ENSGT00940000156795"/>
<dbReference type="HOGENOM" id="CLU_002753_4_1_1"/>
<dbReference type="InParanoid" id="P47866"/>
<dbReference type="OrthoDB" id="6022368at2759"/>
<dbReference type="Reactome" id="R-RNO-373080">
    <property type="pathway name" value="Class B/2 (Secretin family receptors)"/>
</dbReference>
<dbReference type="PRO" id="PR:P47866"/>
<dbReference type="Proteomes" id="UP000002494">
    <property type="component" value="Chromosome 4"/>
</dbReference>
<dbReference type="Proteomes" id="UP000234681">
    <property type="component" value="Chromosome 4"/>
</dbReference>
<dbReference type="Bgee" id="ENSRNOG00000011145">
    <property type="expression patterns" value="Expressed in esophagus and 14 other cell types or tissues"/>
</dbReference>
<dbReference type="ExpressionAtlas" id="P47866">
    <property type="expression patterns" value="baseline and differential"/>
</dbReference>
<dbReference type="GO" id="GO:0030424">
    <property type="term" value="C:axon"/>
    <property type="evidence" value="ECO:0000314"/>
    <property type="project" value="RGD"/>
</dbReference>
<dbReference type="GO" id="GO:0043679">
    <property type="term" value="C:axon terminus"/>
    <property type="evidence" value="ECO:0000314"/>
    <property type="project" value="RGD"/>
</dbReference>
<dbReference type="GO" id="GO:0070852">
    <property type="term" value="C:cell body fiber"/>
    <property type="evidence" value="ECO:0000314"/>
    <property type="project" value="RGD"/>
</dbReference>
<dbReference type="GO" id="GO:0030425">
    <property type="term" value="C:dendrite"/>
    <property type="evidence" value="ECO:0000314"/>
    <property type="project" value="RGD"/>
</dbReference>
<dbReference type="GO" id="GO:0043025">
    <property type="term" value="C:neuronal cell body"/>
    <property type="evidence" value="ECO:0000314"/>
    <property type="project" value="RGD"/>
</dbReference>
<dbReference type="GO" id="GO:0043204">
    <property type="term" value="C:perikaryon"/>
    <property type="evidence" value="ECO:0000314"/>
    <property type="project" value="RGD"/>
</dbReference>
<dbReference type="GO" id="GO:0005886">
    <property type="term" value="C:plasma membrane"/>
    <property type="evidence" value="ECO:0000318"/>
    <property type="project" value="GO_Central"/>
</dbReference>
<dbReference type="GO" id="GO:0043196">
    <property type="term" value="C:varicosity"/>
    <property type="evidence" value="ECO:0000314"/>
    <property type="project" value="RGD"/>
</dbReference>
<dbReference type="GO" id="GO:0015056">
    <property type="term" value="F:corticotrophin-releasing factor receptor activity"/>
    <property type="evidence" value="ECO:0000266"/>
    <property type="project" value="RGD"/>
</dbReference>
<dbReference type="GO" id="GO:0043404">
    <property type="term" value="F:corticotropin-releasing hormone receptor activity"/>
    <property type="evidence" value="ECO:0000314"/>
    <property type="project" value="RGD"/>
</dbReference>
<dbReference type="GO" id="GO:0008528">
    <property type="term" value="F:G protein-coupled peptide receptor activity"/>
    <property type="evidence" value="ECO:0000318"/>
    <property type="project" value="GO_Central"/>
</dbReference>
<dbReference type="GO" id="GO:0004930">
    <property type="term" value="F:G protein-coupled receptor activity"/>
    <property type="evidence" value="ECO:0000304"/>
    <property type="project" value="RGD"/>
</dbReference>
<dbReference type="GO" id="GO:0005179">
    <property type="term" value="F:hormone activity"/>
    <property type="evidence" value="ECO:0000266"/>
    <property type="project" value="RGD"/>
</dbReference>
<dbReference type="GO" id="GO:0017046">
    <property type="term" value="F:peptide hormone binding"/>
    <property type="evidence" value="ECO:0000353"/>
    <property type="project" value="RGD"/>
</dbReference>
<dbReference type="GO" id="GO:0007015">
    <property type="term" value="P:actin filament organization"/>
    <property type="evidence" value="ECO:0000315"/>
    <property type="project" value="RGD"/>
</dbReference>
<dbReference type="GO" id="GO:0007188">
    <property type="term" value="P:adenylate cyclase-modulating G protein-coupled receptor signaling pathway"/>
    <property type="evidence" value="ECO:0000318"/>
    <property type="project" value="GO_Central"/>
</dbReference>
<dbReference type="GO" id="GO:0042423">
    <property type="term" value="P:catecholamine biosynthetic process"/>
    <property type="evidence" value="ECO:0000315"/>
    <property type="project" value="RGD"/>
</dbReference>
<dbReference type="GO" id="GO:0007166">
    <property type="term" value="P:cell surface receptor signaling pathway"/>
    <property type="evidence" value="ECO:0007669"/>
    <property type="project" value="InterPro"/>
</dbReference>
<dbReference type="GO" id="GO:0071385">
    <property type="term" value="P:cellular response to glucocorticoid stimulus"/>
    <property type="evidence" value="ECO:0000270"/>
    <property type="project" value="RGD"/>
</dbReference>
<dbReference type="GO" id="GO:0021549">
    <property type="term" value="P:cerebellum development"/>
    <property type="evidence" value="ECO:0000270"/>
    <property type="project" value="RGD"/>
</dbReference>
<dbReference type="GO" id="GO:0030855">
    <property type="term" value="P:epithelial cell differentiation"/>
    <property type="evidence" value="ECO:0000315"/>
    <property type="project" value="RGD"/>
</dbReference>
<dbReference type="GO" id="GO:0007186">
    <property type="term" value="P:G protein-coupled receptor signaling pathway"/>
    <property type="evidence" value="ECO:0000266"/>
    <property type="project" value="RGD"/>
</dbReference>
<dbReference type="GO" id="GO:0035482">
    <property type="term" value="P:gastric motility"/>
    <property type="evidence" value="ECO:0000315"/>
    <property type="project" value="RGD"/>
</dbReference>
<dbReference type="GO" id="GO:0021854">
    <property type="term" value="P:hypothalamus development"/>
    <property type="evidence" value="ECO:0000270"/>
    <property type="project" value="RGD"/>
</dbReference>
<dbReference type="GO" id="GO:0060291">
    <property type="term" value="P:long-term synaptic potentiation"/>
    <property type="evidence" value="ECO:0000315"/>
    <property type="project" value="RGD"/>
</dbReference>
<dbReference type="GO" id="GO:0016525">
    <property type="term" value="P:negative regulation of angiogenesis"/>
    <property type="evidence" value="ECO:0000266"/>
    <property type="project" value="RGD"/>
</dbReference>
<dbReference type="GO" id="GO:0090281">
    <property type="term" value="P:negative regulation of calcium ion import"/>
    <property type="evidence" value="ECO:0000315"/>
    <property type="project" value="RGD"/>
</dbReference>
<dbReference type="GO" id="GO:2000293">
    <property type="term" value="P:negative regulation of defecation"/>
    <property type="evidence" value="ECO:0000315"/>
    <property type="project" value="RGD"/>
</dbReference>
<dbReference type="GO" id="GO:0032811">
    <property type="term" value="P:negative regulation of epinephrine secretion"/>
    <property type="evidence" value="ECO:0000315"/>
    <property type="project" value="RGD"/>
</dbReference>
<dbReference type="GO" id="GO:2000252">
    <property type="term" value="P:negative regulation of feeding behavior"/>
    <property type="evidence" value="ECO:0000314"/>
    <property type="project" value="RGD"/>
</dbReference>
<dbReference type="GO" id="GO:0046882">
    <property type="term" value="P:negative regulation of follicle-stimulating hormone secretion"/>
    <property type="evidence" value="ECO:0000315"/>
    <property type="project" value="RGD"/>
</dbReference>
<dbReference type="GO" id="GO:0010629">
    <property type="term" value="P:negative regulation of gene expression"/>
    <property type="evidence" value="ECO:0000315"/>
    <property type="project" value="RGD"/>
</dbReference>
<dbReference type="GO" id="GO:0061179">
    <property type="term" value="P:negative regulation of insulin secretion involved in cellular response to glucose stimulus"/>
    <property type="evidence" value="ECO:0000315"/>
    <property type="project" value="RGD"/>
</dbReference>
<dbReference type="GO" id="GO:0033685">
    <property type="term" value="P:negative regulation of luteinizing hormone secretion"/>
    <property type="evidence" value="ECO:0000315"/>
    <property type="project" value="RGD"/>
</dbReference>
<dbReference type="GO" id="GO:0010700">
    <property type="term" value="P:negative regulation of norepinephrine secretion"/>
    <property type="evidence" value="ECO:0000315"/>
    <property type="project" value="RGD"/>
</dbReference>
<dbReference type="GO" id="GO:0007200">
    <property type="term" value="P:phospholipase C-activating G protein-coupled receptor signaling pathway"/>
    <property type="evidence" value="ECO:0000315"/>
    <property type="project" value="RGD"/>
</dbReference>
<dbReference type="GO" id="GO:0045777">
    <property type="term" value="P:positive regulation of blood pressure"/>
    <property type="evidence" value="ECO:0000315"/>
    <property type="project" value="RGD"/>
</dbReference>
<dbReference type="GO" id="GO:0141163">
    <property type="term" value="P:positive regulation of cAMP/PKA signal transduction"/>
    <property type="evidence" value="ECO:0000314"/>
    <property type="project" value="RGD"/>
</dbReference>
<dbReference type="GO" id="GO:2000573">
    <property type="term" value="P:positive regulation of DNA biosynthetic process"/>
    <property type="evidence" value="ECO:0000315"/>
    <property type="project" value="RGD"/>
</dbReference>
<dbReference type="GO" id="GO:0010628">
    <property type="term" value="P:positive regulation of gene expression"/>
    <property type="evidence" value="ECO:0000315"/>
    <property type="project" value="RGD"/>
</dbReference>
<dbReference type="GO" id="GO:0010460">
    <property type="term" value="P:positive regulation of heart rate"/>
    <property type="evidence" value="ECO:0000315"/>
    <property type="project" value="RGD"/>
</dbReference>
<dbReference type="GO" id="GO:0032755">
    <property type="term" value="P:positive regulation of interleukin-6 production"/>
    <property type="evidence" value="ECO:0000315"/>
    <property type="project" value="RGD"/>
</dbReference>
<dbReference type="GO" id="GO:0014064">
    <property type="term" value="P:positive regulation of serotonin secretion"/>
    <property type="evidence" value="ECO:0000315"/>
    <property type="project" value="RGD"/>
</dbReference>
<dbReference type="GO" id="GO:0032874">
    <property type="term" value="P:positive regulation of stress-activated MAPK cascade"/>
    <property type="evidence" value="ECO:0000315"/>
    <property type="project" value="RGD"/>
</dbReference>
<dbReference type="GO" id="GO:0070372">
    <property type="term" value="P:regulation of ERK1 and ERK2 cascade"/>
    <property type="evidence" value="ECO:0000315"/>
    <property type="project" value="RGD"/>
</dbReference>
<dbReference type="GO" id="GO:0048630">
    <property type="term" value="P:skeletal muscle tissue growth"/>
    <property type="evidence" value="ECO:0000314"/>
    <property type="project" value="RGD"/>
</dbReference>
<dbReference type="FunFam" id="1.20.1070.10:FF:000021">
    <property type="entry name" value="Corticotropin releasing factor receptor 2"/>
    <property type="match status" value="1"/>
</dbReference>
<dbReference type="FunFam" id="4.10.1240.10:FF:000006">
    <property type="entry name" value="corticotropin-releasing factor receptor 2 isoform X2"/>
    <property type="match status" value="1"/>
</dbReference>
<dbReference type="Gene3D" id="4.10.1240.10">
    <property type="entry name" value="GPCR, family 2, extracellular hormone receptor domain"/>
    <property type="match status" value="1"/>
</dbReference>
<dbReference type="Gene3D" id="1.20.1070.10">
    <property type="entry name" value="Rhodopsin 7-helix transmembrane proteins"/>
    <property type="match status" value="1"/>
</dbReference>
<dbReference type="InterPro" id="IPR050332">
    <property type="entry name" value="GPCR_2"/>
</dbReference>
<dbReference type="InterPro" id="IPR017981">
    <property type="entry name" value="GPCR_2-like_7TM"/>
</dbReference>
<dbReference type="InterPro" id="IPR003053">
    <property type="entry name" value="GPCR_2_CRF2_rcpt"/>
</dbReference>
<dbReference type="InterPro" id="IPR003051">
    <property type="entry name" value="GPCR_2_CRF_rcpt"/>
</dbReference>
<dbReference type="InterPro" id="IPR036445">
    <property type="entry name" value="GPCR_2_extracell_dom_sf"/>
</dbReference>
<dbReference type="InterPro" id="IPR001879">
    <property type="entry name" value="GPCR_2_extracellular_dom"/>
</dbReference>
<dbReference type="InterPro" id="IPR000832">
    <property type="entry name" value="GPCR_2_secretin-like"/>
</dbReference>
<dbReference type="InterPro" id="IPR017983">
    <property type="entry name" value="GPCR_2_secretin-like_CS"/>
</dbReference>
<dbReference type="PANTHER" id="PTHR45620:SF19">
    <property type="entry name" value="CORTICOTROPIN-RELEASING FACTOR RECEPTOR 2"/>
    <property type="match status" value="1"/>
</dbReference>
<dbReference type="PANTHER" id="PTHR45620">
    <property type="entry name" value="PDF RECEPTOR-LIKE PROTEIN-RELATED"/>
    <property type="match status" value="1"/>
</dbReference>
<dbReference type="Pfam" id="PF00002">
    <property type="entry name" value="7tm_2"/>
    <property type="match status" value="1"/>
</dbReference>
<dbReference type="Pfam" id="PF02793">
    <property type="entry name" value="HRM"/>
    <property type="match status" value="1"/>
</dbReference>
<dbReference type="PRINTS" id="PR01279">
    <property type="entry name" value="CRFRECEPTOR"/>
</dbReference>
<dbReference type="PRINTS" id="PR01281">
    <property type="entry name" value="CRFRECEPTOR2"/>
</dbReference>
<dbReference type="PRINTS" id="PR00249">
    <property type="entry name" value="GPCRSECRETIN"/>
</dbReference>
<dbReference type="SMART" id="SM00008">
    <property type="entry name" value="HormR"/>
    <property type="match status" value="1"/>
</dbReference>
<dbReference type="SUPFAM" id="SSF81321">
    <property type="entry name" value="Family A G protein-coupled receptor-like"/>
    <property type="match status" value="1"/>
</dbReference>
<dbReference type="SUPFAM" id="SSF111418">
    <property type="entry name" value="Hormone receptor domain"/>
    <property type="match status" value="1"/>
</dbReference>
<dbReference type="PROSITE" id="PS00649">
    <property type="entry name" value="G_PROTEIN_RECEP_F2_1"/>
    <property type="match status" value="1"/>
</dbReference>
<dbReference type="PROSITE" id="PS00650">
    <property type="entry name" value="G_PROTEIN_RECEP_F2_2"/>
    <property type="match status" value="1"/>
</dbReference>
<dbReference type="PROSITE" id="PS50227">
    <property type="entry name" value="G_PROTEIN_RECEP_F2_3"/>
    <property type="match status" value="1"/>
</dbReference>
<dbReference type="PROSITE" id="PS50261">
    <property type="entry name" value="G_PROTEIN_RECEP_F2_4"/>
    <property type="match status" value="1"/>
</dbReference>
<feature type="chain" id="PRO_0000012822" description="Corticotropin-releasing factor receptor 2">
    <location>
        <begin position="1"/>
        <end position="411"/>
    </location>
</feature>
<feature type="signal peptide" description="Not cleaved">
    <location>
        <begin position="1"/>
        <end position="19"/>
    </location>
</feature>
<feature type="topological domain" description="Extracellular" evidence="1">
    <location>
        <begin position="1"/>
        <end position="108"/>
    </location>
</feature>
<feature type="transmembrane region" description="Helical; Name=1" evidence="1">
    <location>
        <begin position="109"/>
        <end position="139"/>
    </location>
</feature>
<feature type="topological domain" description="Cytoplasmic" evidence="1">
    <location>
        <begin position="140"/>
        <end position="146"/>
    </location>
</feature>
<feature type="transmembrane region" description="Helical; Name=2" evidence="1">
    <location>
        <begin position="147"/>
        <end position="171"/>
    </location>
</feature>
<feature type="topological domain" description="Extracellular" evidence="1">
    <location>
        <begin position="172"/>
        <end position="185"/>
    </location>
</feature>
<feature type="transmembrane region" description="Helical; Name=3" evidence="1">
    <location>
        <begin position="186"/>
        <end position="214"/>
    </location>
</feature>
<feature type="topological domain" description="Cytoplasmic" evidence="1">
    <location>
        <begin position="215"/>
        <end position="221"/>
    </location>
</feature>
<feature type="transmembrane region" description="Helical; Name=4" evidence="1">
    <location>
        <begin position="222"/>
        <end position="249"/>
    </location>
</feature>
<feature type="topological domain" description="Extracellular" evidence="1">
    <location>
        <begin position="250"/>
        <end position="265"/>
    </location>
</feature>
<feature type="transmembrane region" description="Helical; Name=5" evidence="1">
    <location>
        <begin position="266"/>
        <end position="291"/>
    </location>
</feature>
<feature type="topological domain" description="Cytoplasmic" evidence="1">
    <location>
        <begin position="292"/>
        <end position="302"/>
    </location>
</feature>
<feature type="transmembrane region" description="Helical; Name=6" evidence="1">
    <location>
        <begin position="303"/>
        <end position="327"/>
    </location>
</feature>
<feature type="topological domain" description="Extracellular" evidence="1">
    <location>
        <begin position="328"/>
        <end position="334"/>
    </location>
</feature>
<feature type="transmembrane region" description="Helical; Name=7" evidence="1">
    <location>
        <begin position="335"/>
        <end position="364"/>
    </location>
</feature>
<feature type="topological domain" description="Cytoplasmic" evidence="1">
    <location>
        <begin position="365"/>
        <end position="411"/>
    </location>
</feature>
<feature type="glycosylation site" description="N-linked (GlcNAc...) asparagine" evidence="3">
    <location>
        <position position="13"/>
    </location>
</feature>
<feature type="glycosylation site" description="N-linked (GlcNAc...) asparagine" evidence="2">
    <location>
        <position position="41"/>
    </location>
</feature>
<feature type="glycosylation site" description="N-linked (GlcNAc...) asparagine" evidence="2">
    <location>
        <position position="74"/>
    </location>
</feature>
<feature type="glycosylation site" description="N-linked (GlcNAc...) asparagine" evidence="2">
    <location>
        <position position="86"/>
    </location>
</feature>
<feature type="glycosylation site" description="N-linked (GlcNAc...) asparagine" evidence="2">
    <location>
        <position position="94"/>
    </location>
</feature>
<feature type="disulfide bond" evidence="1">
    <location>
        <begin position="14"/>
        <end position="50"/>
    </location>
</feature>
<feature type="disulfide bond" evidence="1">
    <location>
        <begin position="40"/>
        <end position="83"/>
    </location>
</feature>
<feature type="disulfide bond" evidence="1">
    <location>
        <begin position="64"/>
        <end position="98"/>
    </location>
</feature>
<feature type="disulfide bond" evidence="1">
    <location>
        <begin position="184"/>
        <end position="254"/>
    </location>
</feature>
<feature type="splice variant" id="VSP_002001" description="In isoform CRF2-beta." evidence="5">
    <original>MDAALLLSLLEANCSLALAEELLLDGWGEPPDPE</original>
    <variation>MGHPGSLPSAQLLLCLYSLLPLLQVAQPGRPLQDQPLWTLLEQYCHRTTTRNFS</variation>
    <location>
        <begin position="1"/>
        <end position="34"/>
    </location>
</feature>
<feature type="mutagenesis site" description="Allows cleavage of signal peptide." evidence="3">
    <original>N</original>
    <variation>A</variation>
    <variation>F</variation>
    <variation>I</variation>
    <location>
        <position position="13"/>
    </location>
</feature>
<feature type="sequence conflict" description="In Ref. 1; AAC52159." evidence="5" ref="1">
    <original>V</original>
    <variation>I</variation>
    <location>
        <position position="93"/>
    </location>
</feature>
<protein>
    <recommendedName>
        <fullName>Corticotropin-releasing factor receptor 2</fullName>
        <shortName>CRF-R-2</shortName>
        <shortName>CRF-R2</shortName>
        <shortName>CRFR-2</shortName>
    </recommendedName>
    <alternativeName>
        <fullName>Corticotropin-releasing hormone receptor 2</fullName>
        <shortName>CRH-R-2</shortName>
        <shortName>CRH-R2</shortName>
    </alternativeName>
</protein>
<accession>P47866</accession>
<accession>G3V948</accession>
<organism>
    <name type="scientific">Rattus norvegicus</name>
    <name type="common">Rat</name>
    <dbReference type="NCBI Taxonomy" id="10116"/>
    <lineage>
        <taxon>Eukaryota</taxon>
        <taxon>Metazoa</taxon>
        <taxon>Chordata</taxon>
        <taxon>Craniata</taxon>
        <taxon>Vertebrata</taxon>
        <taxon>Euteleostomi</taxon>
        <taxon>Mammalia</taxon>
        <taxon>Eutheria</taxon>
        <taxon>Euarchontoglires</taxon>
        <taxon>Glires</taxon>
        <taxon>Rodentia</taxon>
        <taxon>Myomorpha</taxon>
        <taxon>Muroidea</taxon>
        <taxon>Muridae</taxon>
        <taxon>Murinae</taxon>
        <taxon>Rattus</taxon>
    </lineage>
</organism>
<evidence type="ECO:0000250" key="1"/>
<evidence type="ECO:0000255" key="2"/>
<evidence type="ECO:0000269" key="3">
    <source>
    </source>
</evidence>
<evidence type="ECO:0000269" key="4">
    <source>
    </source>
</evidence>
<evidence type="ECO:0000305" key="5"/>